<keyword id="KW-0963">Cytoplasm</keyword>
<keyword id="KW-0441">Lipid A biosynthesis</keyword>
<keyword id="KW-0444">Lipid biosynthesis</keyword>
<keyword id="KW-0443">Lipid metabolism</keyword>
<keyword id="KW-0456">Lyase</keyword>
<accession>A9VRC6</accession>
<proteinExistence type="inferred from homology"/>
<evidence type="ECO:0000255" key="1">
    <source>
        <dbReference type="HAMAP-Rule" id="MF_00406"/>
    </source>
</evidence>
<organism>
    <name type="scientific">Bacillus mycoides (strain KBAB4)</name>
    <name type="common">Bacillus weihenstephanensis</name>
    <dbReference type="NCBI Taxonomy" id="315730"/>
    <lineage>
        <taxon>Bacteria</taxon>
        <taxon>Bacillati</taxon>
        <taxon>Bacillota</taxon>
        <taxon>Bacilli</taxon>
        <taxon>Bacillales</taxon>
        <taxon>Bacillaceae</taxon>
        <taxon>Bacillus</taxon>
        <taxon>Bacillus cereus group</taxon>
    </lineage>
</organism>
<dbReference type="EC" id="4.2.1.59" evidence="1"/>
<dbReference type="EMBL" id="CP000903">
    <property type="protein sequence ID" value="ABY46222.1"/>
    <property type="molecule type" value="Genomic_DNA"/>
</dbReference>
<dbReference type="RefSeq" id="WP_000931959.1">
    <property type="nucleotide sequence ID" value="NZ_CAKMRX030000115.1"/>
</dbReference>
<dbReference type="SMR" id="A9VRC6"/>
<dbReference type="GeneID" id="75088464"/>
<dbReference type="KEGG" id="bwe:BcerKBAB4_5076"/>
<dbReference type="eggNOG" id="COG0764">
    <property type="taxonomic scope" value="Bacteria"/>
</dbReference>
<dbReference type="HOGENOM" id="CLU_078912_3_0_9"/>
<dbReference type="Proteomes" id="UP000002154">
    <property type="component" value="Chromosome"/>
</dbReference>
<dbReference type="GO" id="GO:0005737">
    <property type="term" value="C:cytoplasm"/>
    <property type="evidence" value="ECO:0007669"/>
    <property type="project" value="UniProtKB-SubCell"/>
</dbReference>
<dbReference type="GO" id="GO:0016020">
    <property type="term" value="C:membrane"/>
    <property type="evidence" value="ECO:0007669"/>
    <property type="project" value="GOC"/>
</dbReference>
<dbReference type="GO" id="GO:0019171">
    <property type="term" value="F:(3R)-hydroxyacyl-[acyl-carrier-protein] dehydratase activity"/>
    <property type="evidence" value="ECO:0007669"/>
    <property type="project" value="UniProtKB-EC"/>
</dbReference>
<dbReference type="GO" id="GO:0006633">
    <property type="term" value="P:fatty acid biosynthetic process"/>
    <property type="evidence" value="ECO:0007669"/>
    <property type="project" value="UniProtKB-UniRule"/>
</dbReference>
<dbReference type="GO" id="GO:0009245">
    <property type="term" value="P:lipid A biosynthetic process"/>
    <property type="evidence" value="ECO:0007669"/>
    <property type="project" value="UniProtKB-UniRule"/>
</dbReference>
<dbReference type="CDD" id="cd01288">
    <property type="entry name" value="FabZ"/>
    <property type="match status" value="1"/>
</dbReference>
<dbReference type="FunFam" id="3.10.129.10:FF:000001">
    <property type="entry name" value="3-hydroxyacyl-[acyl-carrier-protein] dehydratase FabZ"/>
    <property type="match status" value="1"/>
</dbReference>
<dbReference type="Gene3D" id="3.10.129.10">
    <property type="entry name" value="Hotdog Thioesterase"/>
    <property type="match status" value="1"/>
</dbReference>
<dbReference type="HAMAP" id="MF_00406">
    <property type="entry name" value="FabZ"/>
    <property type="match status" value="1"/>
</dbReference>
<dbReference type="InterPro" id="IPR013114">
    <property type="entry name" value="FabA_FabZ"/>
</dbReference>
<dbReference type="InterPro" id="IPR010084">
    <property type="entry name" value="FabZ"/>
</dbReference>
<dbReference type="InterPro" id="IPR029069">
    <property type="entry name" value="HotDog_dom_sf"/>
</dbReference>
<dbReference type="NCBIfam" id="TIGR01750">
    <property type="entry name" value="fabZ"/>
    <property type="match status" value="1"/>
</dbReference>
<dbReference type="NCBIfam" id="NF000582">
    <property type="entry name" value="PRK00006.1"/>
    <property type="match status" value="1"/>
</dbReference>
<dbReference type="PANTHER" id="PTHR30272">
    <property type="entry name" value="3-HYDROXYACYL-[ACYL-CARRIER-PROTEIN] DEHYDRATASE"/>
    <property type="match status" value="1"/>
</dbReference>
<dbReference type="PANTHER" id="PTHR30272:SF1">
    <property type="entry name" value="3-HYDROXYACYL-[ACYL-CARRIER-PROTEIN] DEHYDRATASE"/>
    <property type="match status" value="1"/>
</dbReference>
<dbReference type="Pfam" id="PF07977">
    <property type="entry name" value="FabA"/>
    <property type="match status" value="1"/>
</dbReference>
<dbReference type="SUPFAM" id="SSF54637">
    <property type="entry name" value="Thioesterase/thiol ester dehydrase-isomerase"/>
    <property type="match status" value="1"/>
</dbReference>
<protein>
    <recommendedName>
        <fullName evidence="1">3-hydroxyacyl-[acyl-carrier-protein] dehydratase FabZ</fullName>
        <ecNumber evidence="1">4.2.1.59</ecNumber>
    </recommendedName>
    <alternativeName>
        <fullName evidence="1">(3R)-hydroxymyristoyl-[acyl-carrier-protein] dehydratase</fullName>
        <shortName evidence="1">(3R)-hydroxymyristoyl-ACP dehydrase</shortName>
    </alternativeName>
    <alternativeName>
        <fullName evidence="1">Beta-hydroxyacyl-ACP dehydratase</fullName>
    </alternativeName>
</protein>
<reference key="1">
    <citation type="journal article" date="2008" name="Chem. Biol. Interact.">
        <title>Extending the Bacillus cereus group genomics to putative food-borne pathogens of different toxicity.</title>
        <authorList>
            <person name="Lapidus A."/>
            <person name="Goltsman E."/>
            <person name="Auger S."/>
            <person name="Galleron N."/>
            <person name="Segurens B."/>
            <person name="Dossat C."/>
            <person name="Land M.L."/>
            <person name="Broussolle V."/>
            <person name="Brillard J."/>
            <person name="Guinebretiere M.-H."/>
            <person name="Sanchis V."/>
            <person name="Nguen-the C."/>
            <person name="Lereclus D."/>
            <person name="Richardson P."/>
            <person name="Wincker P."/>
            <person name="Weissenbach J."/>
            <person name="Ehrlich S.D."/>
            <person name="Sorokin A."/>
        </authorList>
    </citation>
    <scope>NUCLEOTIDE SEQUENCE [LARGE SCALE GENOMIC DNA]</scope>
    <source>
        <strain>KBAB4</strain>
    </source>
</reference>
<comment type="function">
    <text evidence="1">Involved in unsaturated fatty acids biosynthesis. Catalyzes the dehydration of short chain beta-hydroxyacyl-ACPs and long chain saturated and unsaturated beta-hydroxyacyl-ACPs.</text>
</comment>
<comment type="catalytic activity">
    <reaction evidence="1">
        <text>a (3R)-hydroxyacyl-[ACP] = a (2E)-enoyl-[ACP] + H2O</text>
        <dbReference type="Rhea" id="RHEA:13097"/>
        <dbReference type="Rhea" id="RHEA-COMP:9925"/>
        <dbReference type="Rhea" id="RHEA-COMP:9945"/>
        <dbReference type="ChEBI" id="CHEBI:15377"/>
        <dbReference type="ChEBI" id="CHEBI:78784"/>
        <dbReference type="ChEBI" id="CHEBI:78827"/>
        <dbReference type="EC" id="4.2.1.59"/>
    </reaction>
</comment>
<comment type="subcellular location">
    <subcellularLocation>
        <location evidence="1">Cytoplasm</location>
    </subcellularLocation>
</comment>
<comment type="similarity">
    <text evidence="1">Belongs to the thioester dehydratase family. FabZ subfamily.</text>
</comment>
<sequence length="144" mass="15966">MLNIEQIKEIIPHRYPFLLVDKILEVDEGKRAVGIKNVSANEEFFNGHFPDYAVMPGVLIVEALAQVGAVAVLKKEENRGRLAFFAGIDNCRFKKQVRPGDQLRLEVEMTRVRGPIGKGKAIATVDGEVACEAEITFAIGDKKE</sequence>
<gene>
    <name evidence="1" type="primary">fabZ</name>
    <name type="ordered locus">BcerKBAB4_5076</name>
</gene>
<name>FABZ_BACMK</name>
<feature type="chain" id="PRO_1000197278" description="3-hydroxyacyl-[acyl-carrier-protein] dehydratase FabZ">
    <location>
        <begin position="1"/>
        <end position="144"/>
    </location>
</feature>
<feature type="active site" evidence="1">
    <location>
        <position position="48"/>
    </location>
</feature>